<feature type="initiator methionine" description="Removed" evidence="6">
    <location>
        <position position="1"/>
    </location>
</feature>
<feature type="chain" id="PRO_0000055794" description="RING-H2 finger protein ATL48">
    <location>
        <begin position="2"/>
        <end position="349"/>
    </location>
</feature>
<feature type="transmembrane region" description="Helical" evidence="3">
    <location>
        <begin position="21"/>
        <end position="41"/>
    </location>
</feature>
<feature type="transmembrane region" description="Helical" evidence="3">
    <location>
        <begin position="55"/>
        <end position="75"/>
    </location>
</feature>
<feature type="transmembrane region" description="Helical" evidence="3">
    <location>
        <begin position="121"/>
        <end position="141"/>
    </location>
</feature>
<feature type="domain" description="HIG1" evidence="3">
    <location>
        <begin position="1"/>
        <end position="85"/>
    </location>
</feature>
<feature type="zinc finger region" description="RING-type; atypical" evidence="2">
    <location>
        <begin position="207"/>
        <end position="249"/>
    </location>
</feature>
<feature type="modified residue" description="N-acetylserine" evidence="6">
    <location>
        <position position="2"/>
    </location>
</feature>
<feature type="splice variant" id="VSP_014513" description="In isoform 2." evidence="5">
    <location>
        <begin position="1"/>
        <end position="105"/>
    </location>
</feature>
<feature type="splice variant" id="VSP_014514" description="In isoform 3." evidence="4">
    <location>
        <begin position="82"/>
        <end position="349"/>
    </location>
</feature>
<proteinExistence type="evidence at protein level"/>
<evidence type="ECO:0000250" key="1"/>
<evidence type="ECO:0000255" key="2">
    <source>
        <dbReference type="PROSITE-ProRule" id="PRU00175"/>
    </source>
</evidence>
<evidence type="ECO:0000255" key="3">
    <source>
        <dbReference type="PROSITE-ProRule" id="PRU00836"/>
    </source>
</evidence>
<evidence type="ECO:0000303" key="4">
    <source>
    </source>
</evidence>
<evidence type="ECO:0000305" key="5"/>
<evidence type="ECO:0007744" key="6">
    <source>
    </source>
</evidence>
<keyword id="KW-0007">Acetylation</keyword>
<keyword id="KW-0025">Alternative splicing</keyword>
<keyword id="KW-0472">Membrane</keyword>
<keyword id="KW-0479">Metal-binding</keyword>
<keyword id="KW-1185">Reference proteome</keyword>
<keyword id="KW-0808">Transferase</keyword>
<keyword id="KW-0812">Transmembrane</keyword>
<keyword id="KW-1133">Transmembrane helix</keyword>
<keyword id="KW-0833">Ubl conjugation pathway</keyword>
<keyword id="KW-0862">Zinc</keyword>
<keyword id="KW-0863">Zinc-finger</keyword>
<sequence>MSSVEPDMEDLFQEKKRVRNPLVPLGALMTAGVLTAGLISFRRGNSQLGQVLMRARVVVQGATVALMVGTGYYYGDNPWKKLLLSEIHETEALSPKSSSAATLTLMNQKDPSSSSIVSVLCLVISGLALIIVFLGVLYLIFKFLRKSSTLFPIPHFNYNPDLFSFSSPQLQHLFFLHDSGLDQTAIDALPVFLYGNVTISLEQPFDCAVCLNEFSDTDKLRLLPVCSHAFHLHCIDTWLLSNSTCPLCRRSLSTSNVCYNHSETLVAPLSGHQQVDDGKASLAKRVFSVRLGRFKSTNESQSQRHDVKDEIGVRMPRRCYSMGTQQYLVCDQDFVVALSSSPREGNIGR</sequence>
<name>ATL48_ARATH</name>
<organism>
    <name type="scientific">Arabidopsis thaliana</name>
    <name type="common">Mouse-ear cress</name>
    <dbReference type="NCBI Taxonomy" id="3702"/>
    <lineage>
        <taxon>Eukaryota</taxon>
        <taxon>Viridiplantae</taxon>
        <taxon>Streptophyta</taxon>
        <taxon>Embryophyta</taxon>
        <taxon>Tracheophyta</taxon>
        <taxon>Spermatophyta</taxon>
        <taxon>Magnoliopsida</taxon>
        <taxon>eudicotyledons</taxon>
        <taxon>Gunneridae</taxon>
        <taxon>Pentapetalae</taxon>
        <taxon>rosids</taxon>
        <taxon>malvids</taxon>
        <taxon>Brassicales</taxon>
        <taxon>Brassicaceae</taxon>
        <taxon>Camelineae</taxon>
        <taxon>Arabidopsis</taxon>
    </lineage>
</organism>
<accession>Q7X843</accession>
<accession>Q9SU66</accession>
<dbReference type="EC" id="2.3.2.27" evidence="5"/>
<dbReference type="EMBL" id="AB099346">
    <property type="protein sequence ID" value="BAC75820.1"/>
    <property type="molecule type" value="mRNA"/>
</dbReference>
<dbReference type="EMBL" id="AL049658">
    <property type="protein sequence ID" value="CAB41136.1"/>
    <property type="molecule type" value="Genomic_DNA"/>
</dbReference>
<dbReference type="EMBL" id="CP002686">
    <property type="protein sequence ID" value="AEE78358.1"/>
    <property type="molecule type" value="Genomic_DNA"/>
</dbReference>
<dbReference type="EMBL" id="BT008566">
    <property type="protein sequence ID" value="AAP40393.1"/>
    <property type="molecule type" value="mRNA"/>
</dbReference>
<dbReference type="EMBL" id="BT008679">
    <property type="protein sequence ID" value="AAP40486.1"/>
    <property type="molecule type" value="mRNA"/>
</dbReference>
<dbReference type="PIR" id="T06680">
    <property type="entry name" value="T06680"/>
</dbReference>
<dbReference type="RefSeq" id="NP_190386.1">
    <molecule id="Q7X843-1"/>
    <property type="nucleotide sequence ID" value="NM_114672.1"/>
</dbReference>
<dbReference type="SMR" id="Q7X843"/>
<dbReference type="STRING" id="3702.Q7X843"/>
<dbReference type="TCDB" id="8.A.112.1.6">
    <property type="family name" value="the respiratory supercomplex factor (rcf) family"/>
</dbReference>
<dbReference type="iPTMnet" id="Q7X843"/>
<dbReference type="PaxDb" id="3702-AT3G48030.1"/>
<dbReference type="ProteomicsDB" id="246642">
    <molecule id="Q7X843-1"/>
</dbReference>
<dbReference type="EnsemblPlants" id="AT3G48030.1">
    <molecule id="Q7X843-1"/>
    <property type="protein sequence ID" value="AT3G48030.1"/>
    <property type="gene ID" value="AT3G48030"/>
</dbReference>
<dbReference type="GeneID" id="823958"/>
<dbReference type="Gramene" id="AT3G48030.1">
    <molecule id="Q7X843-1"/>
    <property type="protein sequence ID" value="AT3G48030.1"/>
    <property type="gene ID" value="AT3G48030"/>
</dbReference>
<dbReference type="KEGG" id="ath:AT3G48030"/>
<dbReference type="Araport" id="AT3G48030"/>
<dbReference type="TAIR" id="AT3G48030">
    <property type="gene designation" value="ATHIGD1"/>
</dbReference>
<dbReference type="eggNOG" id="KOG0800">
    <property type="taxonomic scope" value="Eukaryota"/>
</dbReference>
<dbReference type="eggNOG" id="KOG4431">
    <property type="taxonomic scope" value="Eukaryota"/>
</dbReference>
<dbReference type="HOGENOM" id="CLU_757271_0_0_1"/>
<dbReference type="InParanoid" id="Q7X843"/>
<dbReference type="PhylomeDB" id="Q7X843"/>
<dbReference type="UniPathway" id="UPA00143"/>
<dbReference type="PRO" id="PR:Q7X843"/>
<dbReference type="Proteomes" id="UP000006548">
    <property type="component" value="Chromosome 3"/>
</dbReference>
<dbReference type="ExpressionAtlas" id="Q7X843">
    <property type="expression patterns" value="baseline and differential"/>
</dbReference>
<dbReference type="GO" id="GO:0016020">
    <property type="term" value="C:membrane"/>
    <property type="evidence" value="ECO:0007669"/>
    <property type="project" value="UniProtKB-SubCell"/>
</dbReference>
<dbReference type="GO" id="GO:0016740">
    <property type="term" value="F:transferase activity"/>
    <property type="evidence" value="ECO:0007669"/>
    <property type="project" value="UniProtKB-KW"/>
</dbReference>
<dbReference type="GO" id="GO:0008270">
    <property type="term" value="F:zinc ion binding"/>
    <property type="evidence" value="ECO:0007669"/>
    <property type="project" value="UniProtKB-KW"/>
</dbReference>
<dbReference type="GO" id="GO:0016567">
    <property type="term" value="P:protein ubiquitination"/>
    <property type="evidence" value="ECO:0007669"/>
    <property type="project" value="UniProtKB-UniPathway"/>
</dbReference>
<dbReference type="CDD" id="cd16461">
    <property type="entry name" value="RING-H2_EL5-like"/>
    <property type="match status" value="1"/>
</dbReference>
<dbReference type="FunFam" id="3.30.40.10:FF:001105">
    <property type="entry name" value="RIKEN cDNA 4930595M18 gene"/>
    <property type="match status" value="1"/>
</dbReference>
<dbReference type="Gene3D" id="6.10.140.1320">
    <property type="match status" value="1"/>
</dbReference>
<dbReference type="Gene3D" id="3.30.40.10">
    <property type="entry name" value="Zinc/RING finger domain, C3HC4 (zinc finger)"/>
    <property type="match status" value="1"/>
</dbReference>
<dbReference type="InterPro" id="IPR007667">
    <property type="entry name" value="Hypoxia_induced_domain"/>
</dbReference>
<dbReference type="InterPro" id="IPR001841">
    <property type="entry name" value="Znf_RING"/>
</dbReference>
<dbReference type="InterPro" id="IPR013083">
    <property type="entry name" value="Znf_RING/FYVE/PHD"/>
</dbReference>
<dbReference type="PANTHER" id="PTHR45768">
    <property type="entry name" value="E3 UBIQUITIN-PROTEIN LIGASE RNF13-LIKE"/>
    <property type="match status" value="1"/>
</dbReference>
<dbReference type="PANTHER" id="PTHR45768:SF18">
    <property type="entry name" value="RING-H2 FINGER PROTEIN ATL47-RELATED"/>
    <property type="match status" value="1"/>
</dbReference>
<dbReference type="Pfam" id="PF04588">
    <property type="entry name" value="HIG_1_N"/>
    <property type="match status" value="1"/>
</dbReference>
<dbReference type="Pfam" id="PF13639">
    <property type="entry name" value="zf-RING_2"/>
    <property type="match status" value="1"/>
</dbReference>
<dbReference type="SMART" id="SM00184">
    <property type="entry name" value="RING"/>
    <property type="match status" value="1"/>
</dbReference>
<dbReference type="SUPFAM" id="SSF57850">
    <property type="entry name" value="RING/U-box"/>
    <property type="match status" value="1"/>
</dbReference>
<dbReference type="PROSITE" id="PS51503">
    <property type="entry name" value="HIG1"/>
    <property type="match status" value="1"/>
</dbReference>
<dbReference type="PROSITE" id="PS50089">
    <property type="entry name" value="ZF_RING_2"/>
    <property type="match status" value="1"/>
</dbReference>
<reference key="1">
    <citation type="submission" date="2003-01" db="EMBL/GenBank/DDBJ databases">
        <title>Structural analysis of YGHL1 gene and its expression in yellowtail (Seriola quinqeradiata) and phylogenetic relations to vertebrate and invertebrate homologs.</title>
        <authorList>
            <person name="Abe S."/>
            <person name="Saeki T."/>
            <person name="Miyamoto K."/>
            <person name="Azama K."/>
            <person name="Cogburn L.A."/>
        </authorList>
    </citation>
    <scope>NUCLEOTIDE SEQUENCE [MRNA] (ISOFORM 1)</scope>
</reference>
<reference key="2">
    <citation type="journal article" date="2000" name="Nature">
        <title>Sequence and analysis of chromosome 3 of the plant Arabidopsis thaliana.</title>
        <authorList>
            <person name="Salanoubat M."/>
            <person name="Lemcke K."/>
            <person name="Rieger M."/>
            <person name="Ansorge W."/>
            <person name="Unseld M."/>
            <person name="Fartmann B."/>
            <person name="Valle G."/>
            <person name="Bloecker H."/>
            <person name="Perez-Alonso M."/>
            <person name="Obermaier B."/>
            <person name="Delseny M."/>
            <person name="Boutry M."/>
            <person name="Grivell L.A."/>
            <person name="Mache R."/>
            <person name="Puigdomenech P."/>
            <person name="De Simone V."/>
            <person name="Choisne N."/>
            <person name="Artiguenave F."/>
            <person name="Robert C."/>
            <person name="Brottier P."/>
            <person name="Wincker P."/>
            <person name="Cattolico L."/>
            <person name="Weissenbach J."/>
            <person name="Saurin W."/>
            <person name="Quetier F."/>
            <person name="Schaefer M."/>
            <person name="Mueller-Auer S."/>
            <person name="Gabel C."/>
            <person name="Fuchs M."/>
            <person name="Benes V."/>
            <person name="Wurmbach E."/>
            <person name="Drzonek H."/>
            <person name="Erfle H."/>
            <person name="Jordan N."/>
            <person name="Bangert S."/>
            <person name="Wiedelmann R."/>
            <person name="Kranz H."/>
            <person name="Voss H."/>
            <person name="Holland R."/>
            <person name="Brandt P."/>
            <person name="Nyakatura G."/>
            <person name="Vezzi A."/>
            <person name="D'Angelo M."/>
            <person name="Pallavicini A."/>
            <person name="Toppo S."/>
            <person name="Simionati B."/>
            <person name="Conrad A."/>
            <person name="Hornischer K."/>
            <person name="Kauer G."/>
            <person name="Loehnert T.-H."/>
            <person name="Nordsiek G."/>
            <person name="Reichelt J."/>
            <person name="Scharfe M."/>
            <person name="Schoen O."/>
            <person name="Bargues M."/>
            <person name="Terol J."/>
            <person name="Climent J."/>
            <person name="Navarro P."/>
            <person name="Collado C."/>
            <person name="Perez-Perez A."/>
            <person name="Ottenwaelder B."/>
            <person name="Duchemin D."/>
            <person name="Cooke R."/>
            <person name="Laudie M."/>
            <person name="Berger-Llauro C."/>
            <person name="Purnelle B."/>
            <person name="Masuy D."/>
            <person name="de Haan M."/>
            <person name="Maarse A.C."/>
            <person name="Alcaraz J.-P."/>
            <person name="Cottet A."/>
            <person name="Casacuberta E."/>
            <person name="Monfort A."/>
            <person name="Argiriou A."/>
            <person name="Flores M."/>
            <person name="Liguori R."/>
            <person name="Vitale D."/>
            <person name="Mannhaupt G."/>
            <person name="Haase D."/>
            <person name="Schoof H."/>
            <person name="Rudd S."/>
            <person name="Zaccaria P."/>
            <person name="Mewes H.-W."/>
            <person name="Mayer K.F.X."/>
            <person name="Kaul S."/>
            <person name="Town C.D."/>
            <person name="Koo H.L."/>
            <person name="Tallon L.J."/>
            <person name="Jenkins J."/>
            <person name="Rooney T."/>
            <person name="Rizzo M."/>
            <person name="Walts A."/>
            <person name="Utterback T."/>
            <person name="Fujii C.Y."/>
            <person name="Shea T.P."/>
            <person name="Creasy T.H."/>
            <person name="Haas B."/>
            <person name="Maiti R."/>
            <person name="Wu D."/>
            <person name="Peterson J."/>
            <person name="Van Aken S."/>
            <person name="Pai G."/>
            <person name="Militscher J."/>
            <person name="Sellers P."/>
            <person name="Gill J.E."/>
            <person name="Feldblyum T.V."/>
            <person name="Preuss D."/>
            <person name="Lin X."/>
            <person name="Nierman W.C."/>
            <person name="Salzberg S.L."/>
            <person name="White O."/>
            <person name="Venter J.C."/>
            <person name="Fraser C.M."/>
            <person name="Kaneko T."/>
            <person name="Nakamura Y."/>
            <person name="Sato S."/>
            <person name="Kato T."/>
            <person name="Asamizu E."/>
            <person name="Sasamoto S."/>
            <person name="Kimura T."/>
            <person name="Idesawa K."/>
            <person name="Kawashima K."/>
            <person name="Kishida Y."/>
            <person name="Kiyokawa C."/>
            <person name="Kohara M."/>
            <person name="Matsumoto M."/>
            <person name="Matsuno A."/>
            <person name="Muraki A."/>
            <person name="Nakayama S."/>
            <person name="Nakazaki N."/>
            <person name="Shinpo S."/>
            <person name="Takeuchi C."/>
            <person name="Wada T."/>
            <person name="Watanabe A."/>
            <person name="Yamada M."/>
            <person name="Yasuda M."/>
            <person name="Tabata S."/>
        </authorList>
    </citation>
    <scope>NUCLEOTIDE SEQUENCE [LARGE SCALE GENOMIC DNA]</scope>
    <source>
        <strain>cv. Columbia</strain>
    </source>
</reference>
<reference key="3">
    <citation type="journal article" date="2017" name="Plant J.">
        <title>Araport11: a complete reannotation of the Arabidopsis thaliana reference genome.</title>
        <authorList>
            <person name="Cheng C.Y."/>
            <person name="Krishnakumar V."/>
            <person name="Chan A.P."/>
            <person name="Thibaud-Nissen F."/>
            <person name="Schobel S."/>
            <person name="Town C.D."/>
        </authorList>
    </citation>
    <scope>GENOME REANNOTATION</scope>
    <source>
        <strain>cv. Columbia</strain>
    </source>
</reference>
<reference key="4">
    <citation type="journal article" date="2003" name="Science">
        <title>Empirical analysis of transcriptional activity in the Arabidopsis genome.</title>
        <authorList>
            <person name="Yamada K."/>
            <person name="Lim J."/>
            <person name="Dale J.M."/>
            <person name="Chen H."/>
            <person name="Shinn P."/>
            <person name="Palm C.J."/>
            <person name="Southwick A.M."/>
            <person name="Wu H.C."/>
            <person name="Kim C.J."/>
            <person name="Nguyen M."/>
            <person name="Pham P.K."/>
            <person name="Cheuk R.F."/>
            <person name="Karlin-Newmann G."/>
            <person name="Liu S.X."/>
            <person name="Lam B."/>
            <person name="Sakano H."/>
            <person name="Wu T."/>
            <person name="Yu G."/>
            <person name="Miranda M."/>
            <person name="Quach H.L."/>
            <person name="Tripp M."/>
            <person name="Chang C.H."/>
            <person name="Lee J.M."/>
            <person name="Toriumi M.J."/>
            <person name="Chan M.M."/>
            <person name="Tang C.C."/>
            <person name="Onodera C.S."/>
            <person name="Deng J.M."/>
            <person name="Akiyama K."/>
            <person name="Ansari Y."/>
            <person name="Arakawa T."/>
            <person name="Banh J."/>
            <person name="Banno F."/>
            <person name="Bowser L."/>
            <person name="Brooks S.Y."/>
            <person name="Carninci P."/>
            <person name="Chao Q."/>
            <person name="Choy N."/>
            <person name="Enju A."/>
            <person name="Goldsmith A.D."/>
            <person name="Gurjal M."/>
            <person name="Hansen N.F."/>
            <person name="Hayashizaki Y."/>
            <person name="Johnson-Hopson C."/>
            <person name="Hsuan V.W."/>
            <person name="Iida K."/>
            <person name="Karnes M."/>
            <person name="Khan S."/>
            <person name="Koesema E."/>
            <person name="Ishida J."/>
            <person name="Jiang P.X."/>
            <person name="Jones T."/>
            <person name="Kawai J."/>
            <person name="Kamiya A."/>
            <person name="Meyers C."/>
            <person name="Nakajima M."/>
            <person name="Narusaka M."/>
            <person name="Seki M."/>
            <person name="Sakurai T."/>
            <person name="Satou M."/>
            <person name="Tamse R."/>
            <person name="Vaysberg M."/>
            <person name="Wallender E.K."/>
            <person name="Wong C."/>
            <person name="Yamamura Y."/>
            <person name="Yuan S."/>
            <person name="Shinozaki K."/>
            <person name="Davis R.W."/>
            <person name="Theologis A."/>
            <person name="Ecker J.R."/>
        </authorList>
    </citation>
    <scope>NUCLEOTIDE SEQUENCE [LARGE SCALE MRNA] (ISOFORM 3)</scope>
    <source>
        <strain>cv. Columbia</strain>
    </source>
</reference>
<reference key="5">
    <citation type="journal article" date="2002" name="Genome Biol.">
        <title>Evaluation and classification of RING-finger domains encoded by the Arabidopsis genome.</title>
        <authorList>
            <person name="Kosarev P."/>
            <person name="Mayer K.F.X."/>
            <person name="Hardtke C.S."/>
        </authorList>
    </citation>
    <scope>GENE FAMILY ORGANIZATION</scope>
</reference>
<reference key="6">
    <citation type="journal article" date="2006" name="J. Mol. Evol.">
        <title>The ATL gene family from Arabidopsis thaliana and Oryza sativa comprises a large number of putative ubiquitin ligases of the RING-H2 type.</title>
        <authorList>
            <person name="Serrano M."/>
            <person name="Parra S."/>
            <person name="Alcaraz L.D."/>
            <person name="Guzman P."/>
        </authorList>
    </citation>
    <scope>NOMENCLATURE</scope>
    <scope>GENE FAMILY ORGANIZATION</scope>
</reference>
<reference key="7">
    <citation type="journal article" date="2012" name="Mol. Cell. Proteomics">
        <title>Comparative large-scale characterisation of plant vs. mammal proteins reveals similar and idiosyncratic N-alpha acetylation features.</title>
        <authorList>
            <person name="Bienvenut W.V."/>
            <person name="Sumpton D."/>
            <person name="Martinez A."/>
            <person name="Lilla S."/>
            <person name="Espagne C."/>
            <person name="Meinnel T."/>
            <person name="Giglione C."/>
        </authorList>
    </citation>
    <scope>ACETYLATION [LARGE SCALE ANALYSIS] AT SER-2</scope>
    <scope>CLEAVAGE OF INITIATOR METHIONINE [LARGE SCALE ANALYSIS]</scope>
    <scope>IDENTIFICATION BY MASS SPECTROMETRY [LARGE SCALE ANALYSIS]</scope>
</reference>
<comment type="catalytic activity">
    <reaction evidence="5">
        <text>S-ubiquitinyl-[E2 ubiquitin-conjugating enzyme]-L-cysteine + [acceptor protein]-L-lysine = [E2 ubiquitin-conjugating enzyme]-L-cysteine + N(6)-ubiquitinyl-[acceptor protein]-L-lysine.</text>
        <dbReference type="EC" id="2.3.2.27"/>
    </reaction>
</comment>
<comment type="pathway">
    <text>Protein modification; protein ubiquitination.</text>
</comment>
<comment type="subcellular location">
    <subcellularLocation>
        <location evidence="3">Membrane</location>
        <topology evidence="3">Multi-pass membrane protein</topology>
    </subcellularLocation>
</comment>
<comment type="alternative products">
    <event type="alternative splicing"/>
    <isoform>
        <id>Q7X843-1</id>
        <name>1</name>
        <name>HIG1-ATL48</name>
        <sequence type="displayed"/>
    </isoform>
    <isoform>
        <id>Q7X843-2</id>
        <name>2</name>
        <name>ATL48</name>
        <sequence type="described" ref="VSP_014513"/>
    </isoform>
    <isoform>
        <id>Q7X843-3</id>
        <name>3</name>
        <name>HIG1</name>
        <sequence type="described" ref="VSP_014514"/>
    </isoform>
</comment>
<comment type="domain">
    <text evidence="1">The RING-type zinc finger domain mediates binding to an E2 ubiquitin-conjugating enzyme.</text>
</comment>
<comment type="similarity">
    <text evidence="5">Belongs to the RING-type zinc finger family. ATL subfamily.</text>
</comment>
<gene>
    <name type="primary">ATL48</name>
    <name type="ordered locus">At3g48030</name>
    <name type="ORF">T17F15.100</name>
</gene>
<protein>
    <recommendedName>
        <fullName>RING-H2 finger protein ATL48</fullName>
        <ecNumber evidence="5">2.3.2.27</ecNumber>
    </recommendedName>
    <alternativeName>
        <fullName evidence="5">RING-type E3 ubiquitin transferase ATL48</fullName>
    </alternativeName>
    <alternativeName>
        <fullName>YGHL1-C3HC4 RING fusion protein</fullName>
    </alternativeName>
</protein>